<proteinExistence type="inferred from homology"/>
<comment type="function">
    <text evidence="1">Involved in mRNA degradation. Catalyzes the phosphorolysis of single-stranded polyribonucleotides processively in the 3'- to 5'-direction.</text>
</comment>
<comment type="catalytic activity">
    <reaction evidence="1">
        <text>RNA(n+1) + phosphate = RNA(n) + a ribonucleoside 5'-diphosphate</text>
        <dbReference type="Rhea" id="RHEA:22096"/>
        <dbReference type="Rhea" id="RHEA-COMP:14527"/>
        <dbReference type="Rhea" id="RHEA-COMP:17342"/>
        <dbReference type="ChEBI" id="CHEBI:43474"/>
        <dbReference type="ChEBI" id="CHEBI:57930"/>
        <dbReference type="ChEBI" id="CHEBI:140395"/>
        <dbReference type="EC" id="2.7.7.8"/>
    </reaction>
</comment>
<comment type="cofactor">
    <cofactor evidence="1">
        <name>Mg(2+)</name>
        <dbReference type="ChEBI" id="CHEBI:18420"/>
    </cofactor>
</comment>
<comment type="subcellular location">
    <subcellularLocation>
        <location evidence="1">Cytoplasm</location>
    </subcellularLocation>
</comment>
<comment type="similarity">
    <text evidence="1">Belongs to the polyribonucleotide nucleotidyltransferase family.</text>
</comment>
<protein>
    <recommendedName>
        <fullName evidence="1">Polyribonucleotide nucleotidyltransferase</fullName>
        <ecNumber evidence="1">2.7.7.8</ecNumber>
    </recommendedName>
    <alternativeName>
        <fullName evidence="1">Polynucleotide phosphorylase</fullName>
        <shortName evidence="1">PNPase</shortName>
    </alternativeName>
</protein>
<keyword id="KW-0963">Cytoplasm</keyword>
<keyword id="KW-0460">Magnesium</keyword>
<keyword id="KW-0479">Metal-binding</keyword>
<keyword id="KW-0548">Nucleotidyltransferase</keyword>
<keyword id="KW-0694">RNA-binding</keyword>
<keyword id="KW-0808">Transferase</keyword>
<dbReference type="EC" id="2.7.7.8" evidence="1"/>
<dbReference type="EMBL" id="CP001150">
    <property type="protein sequence ID" value="ACM02369.1"/>
    <property type="molecule type" value="Genomic_DNA"/>
</dbReference>
<dbReference type="RefSeq" id="WP_015921466.1">
    <property type="nucleotide sequence ID" value="NC_011963.1"/>
</dbReference>
<dbReference type="SMR" id="B9KP47"/>
<dbReference type="GeneID" id="67447887"/>
<dbReference type="KEGG" id="rsk:RSKD131_2509"/>
<dbReference type="HOGENOM" id="CLU_004217_2_2_5"/>
<dbReference type="GO" id="GO:0005829">
    <property type="term" value="C:cytosol"/>
    <property type="evidence" value="ECO:0007669"/>
    <property type="project" value="TreeGrafter"/>
</dbReference>
<dbReference type="GO" id="GO:0000175">
    <property type="term" value="F:3'-5'-RNA exonuclease activity"/>
    <property type="evidence" value="ECO:0007669"/>
    <property type="project" value="TreeGrafter"/>
</dbReference>
<dbReference type="GO" id="GO:0000287">
    <property type="term" value="F:magnesium ion binding"/>
    <property type="evidence" value="ECO:0007669"/>
    <property type="project" value="UniProtKB-UniRule"/>
</dbReference>
<dbReference type="GO" id="GO:0004654">
    <property type="term" value="F:polyribonucleotide nucleotidyltransferase activity"/>
    <property type="evidence" value="ECO:0007669"/>
    <property type="project" value="UniProtKB-UniRule"/>
</dbReference>
<dbReference type="GO" id="GO:0003723">
    <property type="term" value="F:RNA binding"/>
    <property type="evidence" value="ECO:0007669"/>
    <property type="project" value="UniProtKB-UniRule"/>
</dbReference>
<dbReference type="GO" id="GO:0006402">
    <property type="term" value="P:mRNA catabolic process"/>
    <property type="evidence" value="ECO:0007669"/>
    <property type="project" value="UniProtKB-UniRule"/>
</dbReference>
<dbReference type="GO" id="GO:0006396">
    <property type="term" value="P:RNA processing"/>
    <property type="evidence" value="ECO:0007669"/>
    <property type="project" value="InterPro"/>
</dbReference>
<dbReference type="CDD" id="cd02393">
    <property type="entry name" value="KH-I_PNPase"/>
    <property type="match status" value="1"/>
</dbReference>
<dbReference type="CDD" id="cd11363">
    <property type="entry name" value="RNase_PH_PNPase_1"/>
    <property type="match status" value="1"/>
</dbReference>
<dbReference type="CDD" id="cd11364">
    <property type="entry name" value="RNase_PH_PNPase_2"/>
    <property type="match status" value="1"/>
</dbReference>
<dbReference type="CDD" id="cd04472">
    <property type="entry name" value="S1_PNPase"/>
    <property type="match status" value="1"/>
</dbReference>
<dbReference type="FunFam" id="2.40.50.140:FF:000107">
    <property type="entry name" value="Polyribonucleotide nucleotidyltransferase"/>
    <property type="match status" value="1"/>
</dbReference>
<dbReference type="FunFam" id="3.30.1370.10:FF:000001">
    <property type="entry name" value="Polyribonucleotide nucleotidyltransferase"/>
    <property type="match status" value="1"/>
</dbReference>
<dbReference type="FunFam" id="3.30.230.70:FF:000001">
    <property type="entry name" value="Polyribonucleotide nucleotidyltransferase"/>
    <property type="match status" value="1"/>
</dbReference>
<dbReference type="FunFam" id="3.30.230.70:FF:000002">
    <property type="entry name" value="Polyribonucleotide nucleotidyltransferase"/>
    <property type="match status" value="1"/>
</dbReference>
<dbReference type="Gene3D" id="3.30.230.70">
    <property type="entry name" value="GHMP Kinase, N-terminal domain"/>
    <property type="match status" value="2"/>
</dbReference>
<dbReference type="Gene3D" id="3.30.1370.10">
    <property type="entry name" value="K Homology domain, type 1"/>
    <property type="match status" value="1"/>
</dbReference>
<dbReference type="Gene3D" id="2.40.50.140">
    <property type="entry name" value="Nucleic acid-binding proteins"/>
    <property type="match status" value="1"/>
</dbReference>
<dbReference type="HAMAP" id="MF_01595">
    <property type="entry name" value="PNPase"/>
    <property type="match status" value="1"/>
</dbReference>
<dbReference type="InterPro" id="IPR001247">
    <property type="entry name" value="ExoRNase_PH_dom1"/>
</dbReference>
<dbReference type="InterPro" id="IPR015847">
    <property type="entry name" value="ExoRNase_PH_dom2"/>
</dbReference>
<dbReference type="InterPro" id="IPR036345">
    <property type="entry name" value="ExoRNase_PH_dom2_sf"/>
</dbReference>
<dbReference type="InterPro" id="IPR004087">
    <property type="entry name" value="KH_dom"/>
</dbReference>
<dbReference type="InterPro" id="IPR004088">
    <property type="entry name" value="KH_dom_type_1"/>
</dbReference>
<dbReference type="InterPro" id="IPR036612">
    <property type="entry name" value="KH_dom_type_1_sf"/>
</dbReference>
<dbReference type="InterPro" id="IPR012340">
    <property type="entry name" value="NA-bd_OB-fold"/>
</dbReference>
<dbReference type="InterPro" id="IPR012162">
    <property type="entry name" value="PNPase"/>
</dbReference>
<dbReference type="InterPro" id="IPR027408">
    <property type="entry name" value="PNPase/RNase_PH_dom_sf"/>
</dbReference>
<dbReference type="InterPro" id="IPR015848">
    <property type="entry name" value="PNPase_PH_RNA-bd_bac/org-type"/>
</dbReference>
<dbReference type="InterPro" id="IPR036456">
    <property type="entry name" value="PNPase_PH_RNA-bd_sf"/>
</dbReference>
<dbReference type="InterPro" id="IPR020568">
    <property type="entry name" value="Ribosomal_Su5_D2-typ_SF"/>
</dbReference>
<dbReference type="InterPro" id="IPR003029">
    <property type="entry name" value="S1_domain"/>
</dbReference>
<dbReference type="NCBIfam" id="TIGR03591">
    <property type="entry name" value="polynuc_phos"/>
    <property type="match status" value="1"/>
</dbReference>
<dbReference type="NCBIfam" id="NF008805">
    <property type="entry name" value="PRK11824.1"/>
    <property type="match status" value="1"/>
</dbReference>
<dbReference type="PANTHER" id="PTHR11252">
    <property type="entry name" value="POLYRIBONUCLEOTIDE NUCLEOTIDYLTRANSFERASE"/>
    <property type="match status" value="1"/>
</dbReference>
<dbReference type="PANTHER" id="PTHR11252:SF0">
    <property type="entry name" value="POLYRIBONUCLEOTIDE NUCLEOTIDYLTRANSFERASE 1, MITOCHONDRIAL"/>
    <property type="match status" value="1"/>
</dbReference>
<dbReference type="Pfam" id="PF00013">
    <property type="entry name" value="KH_1"/>
    <property type="match status" value="1"/>
</dbReference>
<dbReference type="Pfam" id="PF03726">
    <property type="entry name" value="PNPase"/>
    <property type="match status" value="1"/>
</dbReference>
<dbReference type="Pfam" id="PF01138">
    <property type="entry name" value="RNase_PH"/>
    <property type="match status" value="2"/>
</dbReference>
<dbReference type="Pfam" id="PF03725">
    <property type="entry name" value="RNase_PH_C"/>
    <property type="match status" value="2"/>
</dbReference>
<dbReference type="Pfam" id="PF00575">
    <property type="entry name" value="S1"/>
    <property type="match status" value="1"/>
</dbReference>
<dbReference type="PIRSF" id="PIRSF005499">
    <property type="entry name" value="PNPase"/>
    <property type="match status" value="1"/>
</dbReference>
<dbReference type="SMART" id="SM00322">
    <property type="entry name" value="KH"/>
    <property type="match status" value="1"/>
</dbReference>
<dbReference type="SMART" id="SM00316">
    <property type="entry name" value="S1"/>
    <property type="match status" value="1"/>
</dbReference>
<dbReference type="SUPFAM" id="SSF54791">
    <property type="entry name" value="Eukaryotic type KH-domain (KH-domain type I)"/>
    <property type="match status" value="1"/>
</dbReference>
<dbReference type="SUPFAM" id="SSF50249">
    <property type="entry name" value="Nucleic acid-binding proteins"/>
    <property type="match status" value="1"/>
</dbReference>
<dbReference type="SUPFAM" id="SSF46915">
    <property type="entry name" value="Polynucleotide phosphorylase/guanosine pentaphosphate synthase (PNPase/GPSI), domain 3"/>
    <property type="match status" value="1"/>
</dbReference>
<dbReference type="SUPFAM" id="SSF55666">
    <property type="entry name" value="Ribonuclease PH domain 2-like"/>
    <property type="match status" value="2"/>
</dbReference>
<dbReference type="SUPFAM" id="SSF54211">
    <property type="entry name" value="Ribosomal protein S5 domain 2-like"/>
    <property type="match status" value="2"/>
</dbReference>
<dbReference type="PROSITE" id="PS50084">
    <property type="entry name" value="KH_TYPE_1"/>
    <property type="match status" value="1"/>
</dbReference>
<dbReference type="PROSITE" id="PS50126">
    <property type="entry name" value="S1"/>
    <property type="match status" value="1"/>
</dbReference>
<reference key="1">
    <citation type="journal article" date="2009" name="J. Bacteriol.">
        <title>Complete genome sequence of Rhodobacter sphaeroides KD131.</title>
        <authorList>
            <person name="Lim S.-K."/>
            <person name="Kim S.J."/>
            <person name="Cha S.H."/>
            <person name="Oh Y.-K."/>
            <person name="Rhee H.-J."/>
            <person name="Kim M.-S."/>
            <person name="Lee J.K."/>
        </authorList>
    </citation>
    <scope>NUCLEOTIDE SEQUENCE [LARGE SCALE GENOMIC DNA]</scope>
    <source>
        <strain>KD131 / KCTC 12085</strain>
    </source>
</reference>
<feature type="chain" id="PRO_1000185749" description="Polyribonucleotide nucleotidyltransferase">
    <location>
        <begin position="1"/>
        <end position="716"/>
    </location>
</feature>
<feature type="domain" description="KH" evidence="1">
    <location>
        <begin position="556"/>
        <end position="615"/>
    </location>
</feature>
<feature type="domain" description="S1 motif" evidence="1">
    <location>
        <begin position="625"/>
        <end position="693"/>
    </location>
</feature>
<feature type="region of interest" description="Disordered" evidence="2">
    <location>
        <begin position="695"/>
        <end position="716"/>
    </location>
</feature>
<feature type="compositionally biased region" description="Basic and acidic residues" evidence="2">
    <location>
        <begin position="704"/>
        <end position="716"/>
    </location>
</feature>
<feature type="binding site" evidence="1">
    <location>
        <position position="490"/>
    </location>
    <ligand>
        <name>Mg(2+)</name>
        <dbReference type="ChEBI" id="CHEBI:18420"/>
    </ligand>
</feature>
<feature type="binding site" evidence="1">
    <location>
        <position position="496"/>
    </location>
    <ligand>
        <name>Mg(2+)</name>
        <dbReference type="ChEBI" id="CHEBI:18420"/>
    </ligand>
</feature>
<name>PNP_CERSK</name>
<evidence type="ECO:0000255" key="1">
    <source>
        <dbReference type="HAMAP-Rule" id="MF_01595"/>
    </source>
</evidence>
<evidence type="ECO:0000256" key="2">
    <source>
        <dbReference type="SAM" id="MobiDB-lite"/>
    </source>
</evidence>
<gene>
    <name evidence="1" type="primary">pnp</name>
    <name type="ordered locus">RSKD131_2509</name>
</gene>
<accession>B9KP47</accession>
<organism>
    <name type="scientific">Cereibacter sphaeroides (strain KD131 / KCTC 12085)</name>
    <name type="common">Rhodobacter sphaeroides</name>
    <dbReference type="NCBI Taxonomy" id="557760"/>
    <lineage>
        <taxon>Bacteria</taxon>
        <taxon>Pseudomonadati</taxon>
        <taxon>Pseudomonadota</taxon>
        <taxon>Alphaproteobacteria</taxon>
        <taxon>Rhodobacterales</taxon>
        <taxon>Paracoccaceae</taxon>
        <taxon>Cereibacter</taxon>
    </lineage>
</organism>
<sequence length="716" mass="77412">MFNVTKKSIEWGGETLTLETGKVARQADGSVIATLGETSVMANVTFAKAAKPGQDFFPLTVHYQERYYAAGKVPGGFFKREARPSEKETLTSRLIDRPIRPLFVDGFKNEVLLIVTVLSHDLVNEPDIVAMIAASAALTISGVPFMGPIGAARVGFAGGEYVLNPDVDDMQKLRENPEQRLDLVIAGTKDAVMMVESEAYELSEAEMLGAVKFGHEAMQPVIDMIIDFAEEAAHEPFDFSPPDYAALYAKVKSLGEAQMRAAFAIREKQDRVNAIDAARAAIKAQLSEAELADENLGTAFKKLESSILRGDIINGGARIDGRDTKTVRPIISETSVLPRTHGSALFTRGETQALVVTTLGTGEDEQIIDALHGNSRSNFLLHYNFPPYSVGEVGRFGPPGRREIGHGKLAWRALQAVLPAATDFPYTIRVVSEITESNGSSSMASVCGGSLSMMDAGVPLKAPVAGVAMGLILEDDGKWAVLTDILGDEDHLGDMDFKVAGTENGITSLQMDIKVAGITPEIMEQALAQAKDGRMHILGEMSKALSSANSFSAYAPKIETLTIPTDKIREVIGSGGKVIREIVETSGAKVDINDDGVIKIASNDQAAIKKAYDMIWSIVAEPEEGQIYTGKVVKLVDFGAFVNFFGKRDGLVHVSQIANKRLTHPNEVLKEGQEVKVKLLGFDERGKVRLGMKMVDQETGQEIQPEKKEREEAGEA</sequence>